<name>MUTS_XANCP</name>
<protein>
    <recommendedName>
        <fullName evidence="1">DNA mismatch repair protein MutS</fullName>
    </recommendedName>
</protein>
<keyword id="KW-0067">ATP-binding</keyword>
<keyword id="KW-0227">DNA damage</keyword>
<keyword id="KW-0234">DNA repair</keyword>
<keyword id="KW-0238">DNA-binding</keyword>
<keyword id="KW-0547">Nucleotide-binding</keyword>
<keyword id="KW-1185">Reference proteome</keyword>
<sequence length="891" mass="97931">MRPIDRQIYRPPDFRTTFLQTADTKDKTKLSTGAAEHTPLMKQFFAAKSDYPDLLLFFRMGDFYELFYDDARKAARLLDITLTQRGSSGGAPIPMAGVPVHAYEGYLARLVALGESVAICEQIGDPALAKGLVERKVVRIVTPGTVTDEALLDERRDTLLMAISRSKQGYGLAWADLAGGRFLVNEVDSVDALEAEIARLEPAELLVPDEDNWPEFLRGRVGVRRRPPWLFDADSGRRQLLAFFKLHDLSGFGIDDKPCATAAAGALLGYVEETQKQRLPHLTSIAMEVASEAISMNAATRRHLELDTRVDGDTRNTLLGVLDSTVTPMGGRLLRRWLHRPLRLREVLVQRHHAVGSLIDTGADTDVREAFRALGDLERILTRVALRSARPRDFSTLRDGLALLPKVRTILAPLDSPRLQTLYAELGEHDATAHLLISAVAEQPPLKFSDGGVIATGYDADLDELRRLSTNADQFLIDLEQRERASSGIATLKVGYNRVHGYYIEISKGQAEKAPLHYSRRQTLTNAERYITEELKSFEDKVLSARERSLSREKLLYEGLLDALGGELEGLKRCASALSELDVLAGFAERAQALDWSQPELESAPCLHIERGRHPVVEAVRDQPFEPNDLDLHPDRRMLVITGPNMGGKSTYMRQNALIVLLAHIGSYVPASRAVIGPIDRILTRIGAGDDLARGQSTFMVEMAETSYILHHATPQSLVLMDEIGRGTSTYDGLALADAVARHLAHTNRCYTLFATHYFELTALADASHAGGGSGIANVHLDAVEHGERLVFMHAVKDGPANRSFGLQVAALAGLPKAAVQQARRRLAELEQRGGDSHAAEMAPAALDAPQQFGLFTAPSSAAQEALQALDPDELTPKQALEALYRLKALL</sequence>
<feature type="chain" id="PRO_0000115170" description="DNA mismatch repair protein MutS">
    <location>
        <begin position="1"/>
        <end position="891"/>
    </location>
</feature>
<feature type="binding site" evidence="1">
    <location>
        <begin position="643"/>
        <end position="650"/>
    </location>
    <ligand>
        <name>ATP</name>
        <dbReference type="ChEBI" id="CHEBI:30616"/>
    </ligand>
</feature>
<reference key="1">
    <citation type="journal article" date="2002" name="Nature">
        <title>Comparison of the genomes of two Xanthomonas pathogens with differing host specificities.</title>
        <authorList>
            <person name="da Silva A.C.R."/>
            <person name="Ferro J.A."/>
            <person name="Reinach F.C."/>
            <person name="Farah C.S."/>
            <person name="Furlan L.R."/>
            <person name="Quaggio R.B."/>
            <person name="Monteiro-Vitorello C.B."/>
            <person name="Van Sluys M.A."/>
            <person name="Almeida N.F. Jr."/>
            <person name="Alves L.M.C."/>
            <person name="do Amaral A.M."/>
            <person name="Bertolini M.C."/>
            <person name="Camargo L.E.A."/>
            <person name="Camarotte G."/>
            <person name="Cannavan F."/>
            <person name="Cardozo J."/>
            <person name="Chambergo F."/>
            <person name="Ciapina L.P."/>
            <person name="Cicarelli R.M.B."/>
            <person name="Coutinho L.L."/>
            <person name="Cursino-Santos J.R."/>
            <person name="El-Dorry H."/>
            <person name="Faria J.B."/>
            <person name="Ferreira A.J.S."/>
            <person name="Ferreira R.C.C."/>
            <person name="Ferro M.I.T."/>
            <person name="Formighieri E.F."/>
            <person name="Franco M.C."/>
            <person name="Greggio C.C."/>
            <person name="Gruber A."/>
            <person name="Katsuyama A.M."/>
            <person name="Kishi L.T."/>
            <person name="Leite R.P."/>
            <person name="Lemos E.G.M."/>
            <person name="Lemos M.V.F."/>
            <person name="Locali E.C."/>
            <person name="Machado M.A."/>
            <person name="Madeira A.M.B.N."/>
            <person name="Martinez-Rossi N.M."/>
            <person name="Martins E.C."/>
            <person name="Meidanis J."/>
            <person name="Menck C.F.M."/>
            <person name="Miyaki C.Y."/>
            <person name="Moon D.H."/>
            <person name="Moreira L.M."/>
            <person name="Novo M.T.M."/>
            <person name="Okura V.K."/>
            <person name="Oliveira M.C."/>
            <person name="Oliveira V.R."/>
            <person name="Pereira H.A."/>
            <person name="Rossi A."/>
            <person name="Sena J.A.D."/>
            <person name="Silva C."/>
            <person name="de Souza R.F."/>
            <person name="Spinola L.A.F."/>
            <person name="Takita M.A."/>
            <person name="Tamura R.E."/>
            <person name="Teixeira E.C."/>
            <person name="Tezza R.I.D."/>
            <person name="Trindade dos Santos M."/>
            <person name="Truffi D."/>
            <person name="Tsai S.M."/>
            <person name="White F.F."/>
            <person name="Setubal J.C."/>
            <person name="Kitajima J.P."/>
        </authorList>
    </citation>
    <scope>NUCLEOTIDE SEQUENCE [LARGE SCALE GENOMIC DNA]</scope>
    <source>
        <strain>ATCC 33913 / DSM 3586 / NCPPB 528 / LMG 568 / P 25</strain>
    </source>
</reference>
<proteinExistence type="inferred from homology"/>
<evidence type="ECO:0000255" key="1">
    <source>
        <dbReference type="HAMAP-Rule" id="MF_00096"/>
    </source>
</evidence>
<accession>Q8PBB5</accession>
<dbReference type="EMBL" id="AE008922">
    <property type="protein sequence ID" value="AAM40505.1"/>
    <property type="molecule type" value="Genomic_DNA"/>
</dbReference>
<dbReference type="RefSeq" id="NP_636581.1">
    <property type="nucleotide sequence ID" value="NC_003902.1"/>
</dbReference>
<dbReference type="RefSeq" id="WP_011036404.1">
    <property type="nucleotide sequence ID" value="NC_003902.1"/>
</dbReference>
<dbReference type="SMR" id="Q8PBB5"/>
<dbReference type="STRING" id="190485.XCC1207"/>
<dbReference type="EnsemblBacteria" id="AAM40505">
    <property type="protein sequence ID" value="AAM40505"/>
    <property type="gene ID" value="XCC1207"/>
</dbReference>
<dbReference type="KEGG" id="xcc:XCC1207"/>
<dbReference type="PATRIC" id="fig|190485.4.peg.1297"/>
<dbReference type="eggNOG" id="COG0249">
    <property type="taxonomic scope" value="Bacteria"/>
</dbReference>
<dbReference type="HOGENOM" id="CLU_002472_4_0_6"/>
<dbReference type="OrthoDB" id="9802448at2"/>
<dbReference type="Proteomes" id="UP000001010">
    <property type="component" value="Chromosome"/>
</dbReference>
<dbReference type="GO" id="GO:0005829">
    <property type="term" value="C:cytosol"/>
    <property type="evidence" value="ECO:0000318"/>
    <property type="project" value="GO_Central"/>
</dbReference>
<dbReference type="GO" id="GO:0005524">
    <property type="term" value="F:ATP binding"/>
    <property type="evidence" value="ECO:0007669"/>
    <property type="project" value="UniProtKB-UniRule"/>
</dbReference>
<dbReference type="GO" id="GO:0140664">
    <property type="term" value="F:ATP-dependent DNA damage sensor activity"/>
    <property type="evidence" value="ECO:0007669"/>
    <property type="project" value="InterPro"/>
</dbReference>
<dbReference type="GO" id="GO:0003684">
    <property type="term" value="F:damaged DNA binding"/>
    <property type="evidence" value="ECO:0007669"/>
    <property type="project" value="UniProtKB-UniRule"/>
</dbReference>
<dbReference type="GO" id="GO:0030983">
    <property type="term" value="F:mismatched DNA binding"/>
    <property type="evidence" value="ECO:0000318"/>
    <property type="project" value="GO_Central"/>
</dbReference>
<dbReference type="GO" id="GO:0006298">
    <property type="term" value="P:mismatch repair"/>
    <property type="evidence" value="ECO:0000318"/>
    <property type="project" value="GO_Central"/>
</dbReference>
<dbReference type="CDD" id="cd03284">
    <property type="entry name" value="ABC_MutS1"/>
    <property type="match status" value="1"/>
</dbReference>
<dbReference type="FunFam" id="1.10.1420.10:FF:000018">
    <property type="entry name" value="DNA mismatch repair protein MutS"/>
    <property type="match status" value="1"/>
</dbReference>
<dbReference type="FunFam" id="3.30.420.110:FF:000023">
    <property type="entry name" value="DNA mismatch repair protein MutS"/>
    <property type="match status" value="1"/>
</dbReference>
<dbReference type="FunFam" id="3.40.1170.10:FF:000001">
    <property type="entry name" value="DNA mismatch repair protein MutS"/>
    <property type="match status" value="1"/>
</dbReference>
<dbReference type="FunFam" id="3.40.50.300:FF:000283">
    <property type="entry name" value="DNA mismatch repair protein MutS"/>
    <property type="match status" value="1"/>
</dbReference>
<dbReference type="Gene3D" id="1.10.1420.10">
    <property type="match status" value="2"/>
</dbReference>
<dbReference type="Gene3D" id="6.10.140.430">
    <property type="match status" value="1"/>
</dbReference>
<dbReference type="Gene3D" id="3.40.1170.10">
    <property type="entry name" value="DNA repair protein MutS, domain I"/>
    <property type="match status" value="1"/>
</dbReference>
<dbReference type="Gene3D" id="3.30.420.110">
    <property type="entry name" value="MutS, connector domain"/>
    <property type="match status" value="1"/>
</dbReference>
<dbReference type="Gene3D" id="3.40.50.300">
    <property type="entry name" value="P-loop containing nucleotide triphosphate hydrolases"/>
    <property type="match status" value="1"/>
</dbReference>
<dbReference type="HAMAP" id="MF_00096">
    <property type="entry name" value="MutS"/>
    <property type="match status" value="1"/>
</dbReference>
<dbReference type="InterPro" id="IPR005748">
    <property type="entry name" value="DNA_mismatch_repair_MutS"/>
</dbReference>
<dbReference type="InterPro" id="IPR007695">
    <property type="entry name" value="DNA_mismatch_repair_MutS-lik_N"/>
</dbReference>
<dbReference type="InterPro" id="IPR017261">
    <property type="entry name" value="DNA_mismatch_repair_MutS/MSH"/>
</dbReference>
<dbReference type="InterPro" id="IPR000432">
    <property type="entry name" value="DNA_mismatch_repair_MutS_C"/>
</dbReference>
<dbReference type="InterPro" id="IPR007861">
    <property type="entry name" value="DNA_mismatch_repair_MutS_clamp"/>
</dbReference>
<dbReference type="InterPro" id="IPR007696">
    <property type="entry name" value="DNA_mismatch_repair_MutS_core"/>
</dbReference>
<dbReference type="InterPro" id="IPR016151">
    <property type="entry name" value="DNA_mismatch_repair_MutS_N"/>
</dbReference>
<dbReference type="InterPro" id="IPR036187">
    <property type="entry name" value="DNA_mismatch_repair_MutS_sf"/>
</dbReference>
<dbReference type="InterPro" id="IPR007860">
    <property type="entry name" value="DNA_mmatch_repair_MutS_con_dom"/>
</dbReference>
<dbReference type="InterPro" id="IPR045076">
    <property type="entry name" value="MutS"/>
</dbReference>
<dbReference type="InterPro" id="IPR036678">
    <property type="entry name" value="MutS_con_dom_sf"/>
</dbReference>
<dbReference type="InterPro" id="IPR027417">
    <property type="entry name" value="P-loop_NTPase"/>
</dbReference>
<dbReference type="NCBIfam" id="TIGR01070">
    <property type="entry name" value="mutS1"/>
    <property type="match status" value="1"/>
</dbReference>
<dbReference type="NCBIfam" id="NF003810">
    <property type="entry name" value="PRK05399.1"/>
    <property type="match status" value="1"/>
</dbReference>
<dbReference type="PANTHER" id="PTHR11361:SF34">
    <property type="entry name" value="DNA MISMATCH REPAIR PROTEIN MSH1, MITOCHONDRIAL"/>
    <property type="match status" value="1"/>
</dbReference>
<dbReference type="PANTHER" id="PTHR11361">
    <property type="entry name" value="DNA MISMATCH REPAIR PROTEIN MUTS FAMILY MEMBER"/>
    <property type="match status" value="1"/>
</dbReference>
<dbReference type="Pfam" id="PF01624">
    <property type="entry name" value="MutS_I"/>
    <property type="match status" value="1"/>
</dbReference>
<dbReference type="Pfam" id="PF05188">
    <property type="entry name" value="MutS_II"/>
    <property type="match status" value="1"/>
</dbReference>
<dbReference type="Pfam" id="PF05192">
    <property type="entry name" value="MutS_III"/>
    <property type="match status" value="1"/>
</dbReference>
<dbReference type="Pfam" id="PF05190">
    <property type="entry name" value="MutS_IV"/>
    <property type="match status" value="1"/>
</dbReference>
<dbReference type="Pfam" id="PF00488">
    <property type="entry name" value="MutS_V"/>
    <property type="match status" value="1"/>
</dbReference>
<dbReference type="PIRSF" id="PIRSF037677">
    <property type="entry name" value="DNA_mis_repair_Msh6"/>
    <property type="match status" value="1"/>
</dbReference>
<dbReference type="SMART" id="SM00534">
    <property type="entry name" value="MUTSac"/>
    <property type="match status" value="1"/>
</dbReference>
<dbReference type="SMART" id="SM00533">
    <property type="entry name" value="MUTSd"/>
    <property type="match status" value="1"/>
</dbReference>
<dbReference type="SUPFAM" id="SSF55271">
    <property type="entry name" value="DNA repair protein MutS, domain I"/>
    <property type="match status" value="1"/>
</dbReference>
<dbReference type="SUPFAM" id="SSF53150">
    <property type="entry name" value="DNA repair protein MutS, domain II"/>
    <property type="match status" value="1"/>
</dbReference>
<dbReference type="SUPFAM" id="SSF48334">
    <property type="entry name" value="DNA repair protein MutS, domain III"/>
    <property type="match status" value="1"/>
</dbReference>
<dbReference type="SUPFAM" id="SSF52540">
    <property type="entry name" value="P-loop containing nucleoside triphosphate hydrolases"/>
    <property type="match status" value="1"/>
</dbReference>
<dbReference type="PROSITE" id="PS00486">
    <property type="entry name" value="DNA_MISMATCH_REPAIR_2"/>
    <property type="match status" value="1"/>
</dbReference>
<comment type="function">
    <text evidence="1">This protein is involved in the repair of mismatches in DNA. It is possible that it carries out the mismatch recognition step. This protein has a weak ATPase activity.</text>
</comment>
<comment type="similarity">
    <text evidence="1">Belongs to the DNA mismatch repair MutS family.</text>
</comment>
<organism>
    <name type="scientific">Xanthomonas campestris pv. campestris (strain ATCC 33913 / DSM 3586 / NCPPB 528 / LMG 568 / P 25)</name>
    <dbReference type="NCBI Taxonomy" id="190485"/>
    <lineage>
        <taxon>Bacteria</taxon>
        <taxon>Pseudomonadati</taxon>
        <taxon>Pseudomonadota</taxon>
        <taxon>Gammaproteobacteria</taxon>
        <taxon>Lysobacterales</taxon>
        <taxon>Lysobacteraceae</taxon>
        <taxon>Xanthomonas</taxon>
    </lineage>
</organism>
<gene>
    <name evidence="1" type="primary">mutS</name>
    <name type="ordered locus">XCC1207</name>
</gene>